<proteinExistence type="inferred from homology"/>
<gene>
    <name evidence="1" type="primary">trpC</name>
    <name type="ordered locus">lmo1630</name>
</gene>
<name>TRPC_LISMO</name>
<reference key="1">
    <citation type="journal article" date="2001" name="Science">
        <title>Comparative genomics of Listeria species.</title>
        <authorList>
            <person name="Glaser P."/>
            <person name="Frangeul L."/>
            <person name="Buchrieser C."/>
            <person name="Rusniok C."/>
            <person name="Amend A."/>
            <person name="Baquero F."/>
            <person name="Berche P."/>
            <person name="Bloecker H."/>
            <person name="Brandt P."/>
            <person name="Chakraborty T."/>
            <person name="Charbit A."/>
            <person name="Chetouani F."/>
            <person name="Couve E."/>
            <person name="de Daruvar A."/>
            <person name="Dehoux P."/>
            <person name="Domann E."/>
            <person name="Dominguez-Bernal G."/>
            <person name="Duchaud E."/>
            <person name="Durant L."/>
            <person name="Dussurget O."/>
            <person name="Entian K.-D."/>
            <person name="Fsihi H."/>
            <person name="Garcia-del Portillo F."/>
            <person name="Garrido P."/>
            <person name="Gautier L."/>
            <person name="Goebel W."/>
            <person name="Gomez-Lopez N."/>
            <person name="Hain T."/>
            <person name="Hauf J."/>
            <person name="Jackson D."/>
            <person name="Jones L.-M."/>
            <person name="Kaerst U."/>
            <person name="Kreft J."/>
            <person name="Kuhn M."/>
            <person name="Kunst F."/>
            <person name="Kurapkat G."/>
            <person name="Madueno E."/>
            <person name="Maitournam A."/>
            <person name="Mata Vicente J."/>
            <person name="Ng E."/>
            <person name="Nedjari H."/>
            <person name="Nordsiek G."/>
            <person name="Novella S."/>
            <person name="de Pablos B."/>
            <person name="Perez-Diaz J.-C."/>
            <person name="Purcell R."/>
            <person name="Remmel B."/>
            <person name="Rose M."/>
            <person name="Schlueter T."/>
            <person name="Simoes N."/>
            <person name="Tierrez A."/>
            <person name="Vazquez-Boland J.-A."/>
            <person name="Voss H."/>
            <person name="Wehland J."/>
            <person name="Cossart P."/>
        </authorList>
    </citation>
    <scope>NUCLEOTIDE SEQUENCE [LARGE SCALE GENOMIC DNA]</scope>
    <source>
        <strain>ATCC BAA-679 / EGD-e</strain>
    </source>
</reference>
<accession>Q8Y6Q4</accession>
<comment type="catalytic activity">
    <reaction evidence="1">
        <text>1-(2-carboxyphenylamino)-1-deoxy-D-ribulose 5-phosphate + H(+) = (1S,2R)-1-C-(indol-3-yl)glycerol 3-phosphate + CO2 + H2O</text>
        <dbReference type="Rhea" id="RHEA:23476"/>
        <dbReference type="ChEBI" id="CHEBI:15377"/>
        <dbReference type="ChEBI" id="CHEBI:15378"/>
        <dbReference type="ChEBI" id="CHEBI:16526"/>
        <dbReference type="ChEBI" id="CHEBI:58613"/>
        <dbReference type="ChEBI" id="CHEBI:58866"/>
        <dbReference type="EC" id="4.1.1.48"/>
    </reaction>
</comment>
<comment type="pathway">
    <text evidence="1">Amino-acid biosynthesis; L-tryptophan biosynthesis; L-tryptophan from chorismate: step 4/5.</text>
</comment>
<comment type="similarity">
    <text evidence="1">Belongs to the TrpC family.</text>
</comment>
<sequence>MTFLEEILAQKEVEVAKMPLEQVAEKRKTYSFYEFLKANTNTMQLIAEVKRASPSKGEINMGVNPVLQAKSYQAAGAGMISVLTDPVFFKGSIEDLREVAKNVGIPVLCKDFIISEKQLIRARNAGATVVLLIISALTEEKLITLFEQALALDLEVLVEVHDQEELAVAQKIGAQLIGVNNRNLHTFEVDIAVSERLASDFSSDACFISESGFRTAEDVARVSQKYDAVLVGEALMREATPEVAAKSLKVTR</sequence>
<evidence type="ECO:0000255" key="1">
    <source>
        <dbReference type="HAMAP-Rule" id="MF_00134"/>
    </source>
</evidence>
<keyword id="KW-0028">Amino-acid biosynthesis</keyword>
<keyword id="KW-0057">Aromatic amino acid biosynthesis</keyword>
<keyword id="KW-0210">Decarboxylase</keyword>
<keyword id="KW-0456">Lyase</keyword>
<keyword id="KW-1185">Reference proteome</keyword>
<keyword id="KW-0822">Tryptophan biosynthesis</keyword>
<organism>
    <name type="scientific">Listeria monocytogenes serovar 1/2a (strain ATCC BAA-679 / EGD-e)</name>
    <dbReference type="NCBI Taxonomy" id="169963"/>
    <lineage>
        <taxon>Bacteria</taxon>
        <taxon>Bacillati</taxon>
        <taxon>Bacillota</taxon>
        <taxon>Bacilli</taxon>
        <taxon>Bacillales</taxon>
        <taxon>Listeriaceae</taxon>
        <taxon>Listeria</taxon>
    </lineage>
</organism>
<protein>
    <recommendedName>
        <fullName evidence="1">Indole-3-glycerol phosphate synthase</fullName>
        <shortName evidence="1">IGPS</shortName>
        <ecNumber evidence="1">4.1.1.48</ecNumber>
    </recommendedName>
</protein>
<feature type="chain" id="PRO_0000154232" description="Indole-3-glycerol phosphate synthase">
    <location>
        <begin position="1"/>
        <end position="252"/>
    </location>
</feature>
<dbReference type="EC" id="4.1.1.48" evidence="1"/>
<dbReference type="EMBL" id="AL591980">
    <property type="protein sequence ID" value="CAC99708.1"/>
    <property type="molecule type" value="Genomic_DNA"/>
</dbReference>
<dbReference type="PIR" id="AF1278">
    <property type="entry name" value="AF1278"/>
</dbReference>
<dbReference type="RefSeq" id="NP_465155.1">
    <property type="nucleotide sequence ID" value="NC_003210.1"/>
</dbReference>
<dbReference type="RefSeq" id="WP_003723936.1">
    <property type="nucleotide sequence ID" value="NZ_CP149495.1"/>
</dbReference>
<dbReference type="SMR" id="Q8Y6Q4"/>
<dbReference type="STRING" id="169963.gene:17594287"/>
<dbReference type="PaxDb" id="169963-lmo1630"/>
<dbReference type="EnsemblBacteria" id="CAC99708">
    <property type="protein sequence ID" value="CAC99708"/>
    <property type="gene ID" value="CAC99708"/>
</dbReference>
<dbReference type="GeneID" id="985709"/>
<dbReference type="KEGG" id="lmo:lmo1630"/>
<dbReference type="PATRIC" id="fig|169963.11.peg.1673"/>
<dbReference type="eggNOG" id="COG0134">
    <property type="taxonomic scope" value="Bacteria"/>
</dbReference>
<dbReference type="HOGENOM" id="CLU_034247_2_1_9"/>
<dbReference type="OrthoDB" id="9804217at2"/>
<dbReference type="PhylomeDB" id="Q8Y6Q4"/>
<dbReference type="BioCyc" id="LMON169963:LMO1630-MONOMER"/>
<dbReference type="UniPathway" id="UPA00035">
    <property type="reaction ID" value="UER00043"/>
</dbReference>
<dbReference type="Proteomes" id="UP000000817">
    <property type="component" value="Chromosome"/>
</dbReference>
<dbReference type="GO" id="GO:0004425">
    <property type="term" value="F:indole-3-glycerol-phosphate synthase activity"/>
    <property type="evidence" value="ECO:0000318"/>
    <property type="project" value="GO_Central"/>
</dbReference>
<dbReference type="GO" id="GO:0004640">
    <property type="term" value="F:phosphoribosylanthranilate isomerase activity"/>
    <property type="evidence" value="ECO:0000318"/>
    <property type="project" value="GO_Central"/>
</dbReference>
<dbReference type="GO" id="GO:0000162">
    <property type="term" value="P:L-tryptophan biosynthetic process"/>
    <property type="evidence" value="ECO:0000318"/>
    <property type="project" value="GO_Central"/>
</dbReference>
<dbReference type="CDD" id="cd00331">
    <property type="entry name" value="IGPS"/>
    <property type="match status" value="1"/>
</dbReference>
<dbReference type="FunFam" id="3.20.20.70:FF:000024">
    <property type="entry name" value="Indole-3-glycerol phosphate synthase"/>
    <property type="match status" value="1"/>
</dbReference>
<dbReference type="Gene3D" id="3.20.20.70">
    <property type="entry name" value="Aldolase class I"/>
    <property type="match status" value="1"/>
</dbReference>
<dbReference type="HAMAP" id="MF_00134_B">
    <property type="entry name" value="IGPS_B"/>
    <property type="match status" value="1"/>
</dbReference>
<dbReference type="InterPro" id="IPR013785">
    <property type="entry name" value="Aldolase_TIM"/>
</dbReference>
<dbReference type="InterPro" id="IPR045186">
    <property type="entry name" value="Indole-3-glycerol_P_synth"/>
</dbReference>
<dbReference type="InterPro" id="IPR013798">
    <property type="entry name" value="Indole-3-glycerol_P_synth_dom"/>
</dbReference>
<dbReference type="InterPro" id="IPR001468">
    <property type="entry name" value="Indole-3-GlycerolPSynthase_CS"/>
</dbReference>
<dbReference type="InterPro" id="IPR011060">
    <property type="entry name" value="RibuloseP-bd_barrel"/>
</dbReference>
<dbReference type="NCBIfam" id="NF001371">
    <property type="entry name" value="PRK00278.1-3"/>
    <property type="match status" value="1"/>
</dbReference>
<dbReference type="NCBIfam" id="NF001377">
    <property type="entry name" value="PRK00278.2-4"/>
    <property type="match status" value="1"/>
</dbReference>
<dbReference type="PANTHER" id="PTHR22854:SF2">
    <property type="entry name" value="INDOLE-3-GLYCEROL-PHOSPHATE SYNTHASE"/>
    <property type="match status" value="1"/>
</dbReference>
<dbReference type="PANTHER" id="PTHR22854">
    <property type="entry name" value="TRYPTOPHAN BIOSYNTHESIS PROTEIN"/>
    <property type="match status" value="1"/>
</dbReference>
<dbReference type="Pfam" id="PF00218">
    <property type="entry name" value="IGPS"/>
    <property type="match status" value="1"/>
</dbReference>
<dbReference type="SUPFAM" id="SSF51366">
    <property type="entry name" value="Ribulose-phoshate binding barrel"/>
    <property type="match status" value="1"/>
</dbReference>
<dbReference type="PROSITE" id="PS00614">
    <property type="entry name" value="IGPS"/>
    <property type="match status" value="1"/>
</dbReference>